<evidence type="ECO:0000250" key="1">
    <source>
        <dbReference type="UniProtKB" id="P42126"/>
    </source>
</evidence>
<evidence type="ECO:0000269" key="2">
    <source>
    </source>
</evidence>
<evidence type="ECO:0000303" key="3">
    <source>
    </source>
</evidence>
<evidence type="ECO:0000305" key="4"/>
<evidence type="ECO:0000312" key="5">
    <source>
        <dbReference type="Araport" id="AT4G14440"/>
    </source>
</evidence>
<evidence type="ECO:0000312" key="6">
    <source>
        <dbReference type="EMBL" id="AEE83445.1"/>
    </source>
</evidence>
<evidence type="ECO:0000312" key="7">
    <source>
        <dbReference type="EMBL" id="CAB10223.1"/>
    </source>
</evidence>
<gene>
    <name evidence="3" type="primary">ECI3</name>
    <name evidence="6" type="synonym">HCD1</name>
    <name evidence="5" type="ordered locus">At4g14440</name>
    <name evidence="7" type="ORF">dl3260c</name>
</gene>
<comment type="function">
    <text evidence="2">Able to isomerize both 3-cis and 3-trans double bonds into the 2-trans form in a range of enoyl-CoA species. Essential for the beta oxidation of unsaturated fatty acids.</text>
</comment>
<comment type="catalytic activity">
    <reaction evidence="2">
        <text>a (3Z)-enoyl-CoA = a 4-saturated (2E)-enoyl-CoA</text>
        <dbReference type="Rhea" id="RHEA:45900"/>
        <dbReference type="ChEBI" id="CHEBI:85097"/>
        <dbReference type="ChEBI" id="CHEBI:85489"/>
        <dbReference type="EC" id="5.3.3.8"/>
    </reaction>
</comment>
<comment type="catalytic activity">
    <reaction evidence="2">
        <text>a (3E)-enoyl-CoA = a 4-saturated (2E)-enoyl-CoA</text>
        <dbReference type="Rhea" id="RHEA:45228"/>
        <dbReference type="ChEBI" id="CHEBI:58521"/>
        <dbReference type="ChEBI" id="CHEBI:85097"/>
        <dbReference type="EC" id="5.3.3.8"/>
    </reaction>
</comment>
<comment type="pathway">
    <text evidence="4">Lipid metabolism; fatty acid beta-oxidation.</text>
</comment>
<comment type="subcellular location">
    <subcellularLocation>
        <location evidence="2">Cytoplasm</location>
    </subcellularLocation>
    <subcellularLocation>
        <location evidence="2">Nucleus</location>
    </subcellularLocation>
</comment>
<comment type="similarity">
    <text evidence="4">Belongs to the enoyl-CoA hydratase/isomerase family.</text>
</comment>
<name>ECI3_ARATH</name>
<dbReference type="EC" id="5.3.3.8" evidence="2"/>
<dbReference type="EMBL" id="Z97336">
    <property type="protein sequence ID" value="CAB10223.1"/>
    <property type="molecule type" value="Genomic_DNA"/>
</dbReference>
<dbReference type="EMBL" id="AL161539">
    <property type="protein sequence ID" value="CAB78486.1"/>
    <property type="molecule type" value="Genomic_DNA"/>
</dbReference>
<dbReference type="EMBL" id="CP002687">
    <property type="protein sequence ID" value="AEE83445.1"/>
    <property type="molecule type" value="Genomic_DNA"/>
</dbReference>
<dbReference type="EMBL" id="AY072398">
    <property type="protein sequence ID" value="AAL62390.1"/>
    <property type="molecule type" value="mRNA"/>
</dbReference>
<dbReference type="EMBL" id="BT006275">
    <property type="protein sequence ID" value="AAP13383.1"/>
    <property type="molecule type" value="mRNA"/>
</dbReference>
<dbReference type="PIR" id="E71406">
    <property type="entry name" value="E71406"/>
</dbReference>
<dbReference type="RefSeq" id="NP_193180.1">
    <property type="nucleotide sequence ID" value="NM_117523.4"/>
</dbReference>
<dbReference type="SMR" id="O23300"/>
<dbReference type="FunCoup" id="O23300">
    <property type="interactions" value="213"/>
</dbReference>
<dbReference type="IntAct" id="O23300">
    <property type="interactions" value="2"/>
</dbReference>
<dbReference type="STRING" id="3702.O23300"/>
<dbReference type="iPTMnet" id="O23300"/>
<dbReference type="PaxDb" id="3702-AT4G14440.1"/>
<dbReference type="ProteomicsDB" id="224723"/>
<dbReference type="EnsemblPlants" id="AT4G14440.1">
    <property type="protein sequence ID" value="AT4G14440.1"/>
    <property type="gene ID" value="AT4G14440"/>
</dbReference>
<dbReference type="GeneID" id="827089"/>
<dbReference type="Gramene" id="AT4G14440.1">
    <property type="protein sequence ID" value="AT4G14440.1"/>
    <property type="gene ID" value="AT4G14440"/>
</dbReference>
<dbReference type="KEGG" id="ath:AT4G14440"/>
<dbReference type="Araport" id="AT4G14440"/>
<dbReference type="TAIR" id="AT4G14440">
    <property type="gene designation" value="HCD1"/>
</dbReference>
<dbReference type="eggNOG" id="ENOG502QS1J">
    <property type="taxonomic scope" value="Eukaryota"/>
</dbReference>
<dbReference type="HOGENOM" id="CLU_009834_3_2_1"/>
<dbReference type="InParanoid" id="O23300"/>
<dbReference type="OMA" id="LWIIELH"/>
<dbReference type="PhylomeDB" id="O23300"/>
<dbReference type="BioCyc" id="ARA:AT4G14440-MONOMER"/>
<dbReference type="BioCyc" id="MetaCyc:AT4G14440-MONOMER"/>
<dbReference type="UniPathway" id="UPA00659"/>
<dbReference type="PRO" id="PR:O23300"/>
<dbReference type="Proteomes" id="UP000006548">
    <property type="component" value="Chromosome 4"/>
</dbReference>
<dbReference type="ExpressionAtlas" id="O23300">
    <property type="expression patterns" value="baseline and differential"/>
</dbReference>
<dbReference type="GO" id="GO:0005829">
    <property type="term" value="C:cytosol"/>
    <property type="evidence" value="ECO:0000314"/>
    <property type="project" value="TAIR"/>
</dbReference>
<dbReference type="GO" id="GO:0005634">
    <property type="term" value="C:nucleus"/>
    <property type="evidence" value="ECO:0000314"/>
    <property type="project" value="TAIR"/>
</dbReference>
<dbReference type="GO" id="GO:0004165">
    <property type="term" value="F:delta(3)-delta(2)-enoyl-CoA isomerase activity"/>
    <property type="evidence" value="ECO:0000314"/>
    <property type="project" value="TAIR"/>
</dbReference>
<dbReference type="GO" id="GO:0006635">
    <property type="term" value="P:fatty acid beta-oxidation"/>
    <property type="evidence" value="ECO:0007669"/>
    <property type="project" value="UniProtKB-UniPathway"/>
</dbReference>
<dbReference type="GO" id="GO:0009062">
    <property type="term" value="P:fatty acid catabolic process"/>
    <property type="evidence" value="ECO:0000315"/>
    <property type="project" value="TAIR"/>
</dbReference>
<dbReference type="CDD" id="cd06558">
    <property type="entry name" value="crotonase-like"/>
    <property type="match status" value="1"/>
</dbReference>
<dbReference type="FunFam" id="3.90.226.10:FF:000049">
    <property type="entry name" value="Enoyl-CoA delta isomerase 3"/>
    <property type="match status" value="1"/>
</dbReference>
<dbReference type="Gene3D" id="3.90.226.10">
    <property type="entry name" value="2-enoyl-CoA Hydratase, Chain A, domain 1"/>
    <property type="match status" value="1"/>
</dbReference>
<dbReference type="InterPro" id="IPR029045">
    <property type="entry name" value="ClpP/crotonase-like_dom_sf"/>
</dbReference>
<dbReference type="InterPro" id="IPR001753">
    <property type="entry name" value="Enoyl-CoA_hydra/iso"/>
</dbReference>
<dbReference type="PANTHER" id="PTHR11941:SF144">
    <property type="entry name" value="ENOYL-COA DELTA ISOMERASE 3"/>
    <property type="match status" value="1"/>
</dbReference>
<dbReference type="PANTHER" id="PTHR11941">
    <property type="entry name" value="ENOYL-COA HYDRATASE-RELATED"/>
    <property type="match status" value="1"/>
</dbReference>
<dbReference type="Pfam" id="PF00378">
    <property type="entry name" value="ECH_1"/>
    <property type="match status" value="1"/>
</dbReference>
<dbReference type="SUPFAM" id="SSF52096">
    <property type="entry name" value="ClpP/crotonase"/>
    <property type="match status" value="1"/>
</dbReference>
<keyword id="KW-0963">Cytoplasm</keyword>
<keyword id="KW-0276">Fatty acid metabolism</keyword>
<keyword id="KW-0413">Isomerase</keyword>
<keyword id="KW-0443">Lipid metabolism</keyword>
<keyword id="KW-0539">Nucleus</keyword>
<keyword id="KW-1185">Reference proteome</keyword>
<feature type="chain" id="PRO_0000432486" description="Enoyl-CoA delta isomerase 3">
    <location>
        <begin position="1"/>
        <end position="238"/>
    </location>
</feature>
<feature type="site" description="Important for catalytic activity" evidence="1">
    <location>
        <position position="133"/>
    </location>
</feature>
<protein>
    <recommendedName>
        <fullName evidence="4">Enoyl-CoA delta isomerase 3</fullName>
        <ecNumber evidence="2">5.3.3.8</ecNumber>
    </recommendedName>
    <alternativeName>
        <fullName evidence="6">3-hydroxyacyl-CoA dehydratase 1</fullName>
    </alternativeName>
    <alternativeName>
        <fullName evidence="3">Delta(3),Delta(2)-enoyl CoA isomerase 3</fullName>
        <shortName evidence="3">AtECI3</shortName>
    </alternativeName>
</protein>
<proteinExistence type="evidence at protein level"/>
<sequence length="238" mass="25596">MCTLEKRGDLFLLTLTGEDEHRFHPDTIASVLSLLEQAKSQSTKGSVLITTGHGKFFSNGFDLAWAQSAGHGAIKRMHQMVKSFKPVLAALLDLPMPTIAALNGHAAASGLMFALSHDYVFMRKDRGVLYMSEVDIGLPVPDYFSALVVAKVGSGIARRELLLSGKKLKGEEAVALGIVDSAAHDSAEGVVEATVSLGESLAAKKWNGEVYATIRKSLYPELCRMVDLTANNLATHNL</sequence>
<organism>
    <name type="scientific">Arabidopsis thaliana</name>
    <name type="common">Mouse-ear cress</name>
    <dbReference type="NCBI Taxonomy" id="3702"/>
    <lineage>
        <taxon>Eukaryota</taxon>
        <taxon>Viridiplantae</taxon>
        <taxon>Streptophyta</taxon>
        <taxon>Embryophyta</taxon>
        <taxon>Tracheophyta</taxon>
        <taxon>Spermatophyta</taxon>
        <taxon>Magnoliopsida</taxon>
        <taxon>eudicotyledons</taxon>
        <taxon>Gunneridae</taxon>
        <taxon>Pentapetalae</taxon>
        <taxon>rosids</taxon>
        <taxon>malvids</taxon>
        <taxon>Brassicales</taxon>
        <taxon>Brassicaceae</taxon>
        <taxon>Camelineae</taxon>
        <taxon>Arabidopsis</taxon>
    </lineage>
</organism>
<accession>O23300</accession>
<reference key="1">
    <citation type="journal article" date="1998" name="Nature">
        <title>Analysis of 1.9 Mb of contiguous sequence from chromosome 4 of Arabidopsis thaliana.</title>
        <authorList>
            <person name="Bevan M."/>
            <person name="Bancroft I."/>
            <person name="Bent E."/>
            <person name="Love K."/>
            <person name="Goodman H.M."/>
            <person name="Dean C."/>
            <person name="Bergkamp R."/>
            <person name="Dirkse W."/>
            <person name="van Staveren M."/>
            <person name="Stiekema W."/>
            <person name="Drost L."/>
            <person name="Ridley P."/>
            <person name="Hudson S.-A."/>
            <person name="Patel K."/>
            <person name="Murphy G."/>
            <person name="Piffanelli P."/>
            <person name="Wedler H."/>
            <person name="Wedler E."/>
            <person name="Wambutt R."/>
            <person name="Weitzenegger T."/>
            <person name="Pohl T."/>
            <person name="Terryn N."/>
            <person name="Gielen J."/>
            <person name="Villarroel R."/>
            <person name="De Clercq R."/>
            <person name="van Montagu M."/>
            <person name="Lecharny A."/>
            <person name="Aubourg S."/>
            <person name="Gy I."/>
            <person name="Kreis M."/>
            <person name="Lao N."/>
            <person name="Kavanagh T."/>
            <person name="Hempel S."/>
            <person name="Kotter P."/>
            <person name="Entian K.-D."/>
            <person name="Rieger M."/>
            <person name="Schaefer M."/>
            <person name="Funk B."/>
            <person name="Mueller-Auer S."/>
            <person name="Silvey M."/>
            <person name="James R."/>
            <person name="Monfort A."/>
            <person name="Pons A."/>
            <person name="Puigdomenech P."/>
            <person name="Douka A."/>
            <person name="Voukelatou E."/>
            <person name="Milioni D."/>
            <person name="Hatzopoulos P."/>
            <person name="Piravandi E."/>
            <person name="Obermaier B."/>
            <person name="Hilbert H."/>
            <person name="Duesterhoeft A."/>
            <person name="Moores T."/>
            <person name="Jones J.D.G."/>
            <person name="Eneva T."/>
            <person name="Palme K."/>
            <person name="Benes V."/>
            <person name="Rechmann S."/>
            <person name="Ansorge W."/>
            <person name="Cooke R."/>
            <person name="Berger C."/>
            <person name="Delseny M."/>
            <person name="Voet M."/>
            <person name="Volckaert G."/>
            <person name="Mewes H.-W."/>
            <person name="Klosterman S."/>
            <person name="Schueller C."/>
            <person name="Chalwatzis N."/>
        </authorList>
    </citation>
    <scope>NUCLEOTIDE SEQUENCE [LARGE SCALE GENOMIC DNA]</scope>
    <source>
        <strain>cv. Columbia</strain>
    </source>
</reference>
<reference key="2">
    <citation type="journal article" date="1999" name="Nature">
        <title>Sequence and analysis of chromosome 4 of the plant Arabidopsis thaliana.</title>
        <authorList>
            <person name="Mayer K.F.X."/>
            <person name="Schueller C."/>
            <person name="Wambutt R."/>
            <person name="Murphy G."/>
            <person name="Volckaert G."/>
            <person name="Pohl T."/>
            <person name="Duesterhoeft A."/>
            <person name="Stiekema W."/>
            <person name="Entian K.-D."/>
            <person name="Terryn N."/>
            <person name="Harris B."/>
            <person name="Ansorge W."/>
            <person name="Brandt P."/>
            <person name="Grivell L.A."/>
            <person name="Rieger M."/>
            <person name="Weichselgartner M."/>
            <person name="de Simone V."/>
            <person name="Obermaier B."/>
            <person name="Mache R."/>
            <person name="Mueller M."/>
            <person name="Kreis M."/>
            <person name="Delseny M."/>
            <person name="Puigdomenech P."/>
            <person name="Watson M."/>
            <person name="Schmidtheini T."/>
            <person name="Reichert B."/>
            <person name="Portetelle D."/>
            <person name="Perez-Alonso M."/>
            <person name="Boutry M."/>
            <person name="Bancroft I."/>
            <person name="Vos P."/>
            <person name="Hoheisel J."/>
            <person name="Zimmermann W."/>
            <person name="Wedler H."/>
            <person name="Ridley P."/>
            <person name="Langham S.-A."/>
            <person name="McCullagh B."/>
            <person name="Bilham L."/>
            <person name="Robben J."/>
            <person name="van der Schueren J."/>
            <person name="Grymonprez B."/>
            <person name="Chuang Y.-J."/>
            <person name="Vandenbussche F."/>
            <person name="Braeken M."/>
            <person name="Weltjens I."/>
            <person name="Voet M."/>
            <person name="Bastiaens I."/>
            <person name="Aert R."/>
            <person name="Defoor E."/>
            <person name="Weitzenegger T."/>
            <person name="Bothe G."/>
            <person name="Ramsperger U."/>
            <person name="Hilbert H."/>
            <person name="Braun M."/>
            <person name="Holzer E."/>
            <person name="Brandt A."/>
            <person name="Peters S."/>
            <person name="van Staveren M."/>
            <person name="Dirkse W."/>
            <person name="Mooijman P."/>
            <person name="Klein Lankhorst R."/>
            <person name="Rose M."/>
            <person name="Hauf J."/>
            <person name="Koetter P."/>
            <person name="Berneiser S."/>
            <person name="Hempel S."/>
            <person name="Feldpausch M."/>
            <person name="Lamberth S."/>
            <person name="Van den Daele H."/>
            <person name="De Keyser A."/>
            <person name="Buysshaert C."/>
            <person name="Gielen J."/>
            <person name="Villarroel R."/>
            <person name="De Clercq R."/>
            <person name="van Montagu M."/>
            <person name="Rogers J."/>
            <person name="Cronin A."/>
            <person name="Quail M.A."/>
            <person name="Bray-Allen S."/>
            <person name="Clark L."/>
            <person name="Doggett J."/>
            <person name="Hall S."/>
            <person name="Kay M."/>
            <person name="Lennard N."/>
            <person name="McLay K."/>
            <person name="Mayes R."/>
            <person name="Pettett A."/>
            <person name="Rajandream M.A."/>
            <person name="Lyne M."/>
            <person name="Benes V."/>
            <person name="Rechmann S."/>
            <person name="Borkova D."/>
            <person name="Bloecker H."/>
            <person name="Scharfe M."/>
            <person name="Grimm M."/>
            <person name="Loehnert T.-H."/>
            <person name="Dose S."/>
            <person name="de Haan M."/>
            <person name="Maarse A.C."/>
            <person name="Schaefer M."/>
            <person name="Mueller-Auer S."/>
            <person name="Gabel C."/>
            <person name="Fuchs M."/>
            <person name="Fartmann B."/>
            <person name="Granderath K."/>
            <person name="Dauner D."/>
            <person name="Herzl A."/>
            <person name="Neumann S."/>
            <person name="Argiriou A."/>
            <person name="Vitale D."/>
            <person name="Liguori R."/>
            <person name="Piravandi E."/>
            <person name="Massenet O."/>
            <person name="Quigley F."/>
            <person name="Clabauld G."/>
            <person name="Muendlein A."/>
            <person name="Felber R."/>
            <person name="Schnabl S."/>
            <person name="Hiller R."/>
            <person name="Schmidt W."/>
            <person name="Lecharny A."/>
            <person name="Aubourg S."/>
            <person name="Chefdor F."/>
            <person name="Cooke R."/>
            <person name="Berger C."/>
            <person name="Monfort A."/>
            <person name="Casacuberta E."/>
            <person name="Gibbons T."/>
            <person name="Weber N."/>
            <person name="Vandenbol M."/>
            <person name="Bargues M."/>
            <person name="Terol J."/>
            <person name="Torres A."/>
            <person name="Perez-Perez A."/>
            <person name="Purnelle B."/>
            <person name="Bent E."/>
            <person name="Johnson S."/>
            <person name="Tacon D."/>
            <person name="Jesse T."/>
            <person name="Heijnen L."/>
            <person name="Schwarz S."/>
            <person name="Scholler P."/>
            <person name="Heber S."/>
            <person name="Francs P."/>
            <person name="Bielke C."/>
            <person name="Frishman D."/>
            <person name="Haase D."/>
            <person name="Lemcke K."/>
            <person name="Mewes H.-W."/>
            <person name="Stocker S."/>
            <person name="Zaccaria P."/>
            <person name="Bevan M."/>
            <person name="Wilson R.K."/>
            <person name="de la Bastide M."/>
            <person name="Habermann K."/>
            <person name="Parnell L."/>
            <person name="Dedhia N."/>
            <person name="Gnoj L."/>
            <person name="Schutz K."/>
            <person name="Huang E."/>
            <person name="Spiegel L."/>
            <person name="Sekhon M."/>
            <person name="Murray J."/>
            <person name="Sheet P."/>
            <person name="Cordes M."/>
            <person name="Abu-Threideh J."/>
            <person name="Stoneking T."/>
            <person name="Kalicki J."/>
            <person name="Graves T."/>
            <person name="Harmon G."/>
            <person name="Edwards J."/>
            <person name="Latreille P."/>
            <person name="Courtney L."/>
            <person name="Cloud J."/>
            <person name="Abbott A."/>
            <person name="Scott K."/>
            <person name="Johnson D."/>
            <person name="Minx P."/>
            <person name="Bentley D."/>
            <person name="Fulton B."/>
            <person name="Miller N."/>
            <person name="Greco T."/>
            <person name="Kemp K."/>
            <person name="Kramer J."/>
            <person name="Fulton L."/>
            <person name="Mardis E."/>
            <person name="Dante M."/>
            <person name="Pepin K."/>
            <person name="Hillier L.W."/>
            <person name="Nelson J."/>
            <person name="Spieth J."/>
            <person name="Ryan E."/>
            <person name="Andrews S."/>
            <person name="Geisel C."/>
            <person name="Layman D."/>
            <person name="Du H."/>
            <person name="Ali J."/>
            <person name="Berghoff A."/>
            <person name="Jones K."/>
            <person name="Drone K."/>
            <person name="Cotton M."/>
            <person name="Joshu C."/>
            <person name="Antonoiu B."/>
            <person name="Zidanic M."/>
            <person name="Strong C."/>
            <person name="Sun H."/>
            <person name="Lamar B."/>
            <person name="Yordan C."/>
            <person name="Ma P."/>
            <person name="Zhong J."/>
            <person name="Preston R."/>
            <person name="Vil D."/>
            <person name="Shekher M."/>
            <person name="Matero A."/>
            <person name="Shah R."/>
            <person name="Swaby I.K."/>
            <person name="O'Shaughnessy A."/>
            <person name="Rodriguez M."/>
            <person name="Hoffman J."/>
            <person name="Till S."/>
            <person name="Granat S."/>
            <person name="Shohdy N."/>
            <person name="Hasegawa A."/>
            <person name="Hameed A."/>
            <person name="Lodhi M."/>
            <person name="Johnson A."/>
            <person name="Chen E."/>
            <person name="Marra M.A."/>
            <person name="Martienssen R."/>
            <person name="McCombie W.R."/>
        </authorList>
    </citation>
    <scope>NUCLEOTIDE SEQUENCE [LARGE SCALE GENOMIC DNA]</scope>
    <source>
        <strain>cv. Columbia</strain>
    </source>
</reference>
<reference key="3">
    <citation type="journal article" date="2017" name="Plant J.">
        <title>Araport11: a complete reannotation of the Arabidopsis thaliana reference genome.</title>
        <authorList>
            <person name="Cheng C.Y."/>
            <person name="Krishnakumar V."/>
            <person name="Chan A.P."/>
            <person name="Thibaud-Nissen F."/>
            <person name="Schobel S."/>
            <person name="Town C.D."/>
        </authorList>
    </citation>
    <scope>GENOME REANNOTATION</scope>
    <source>
        <strain>cv. Columbia</strain>
    </source>
</reference>
<reference key="4">
    <citation type="journal article" date="2003" name="Science">
        <title>Empirical analysis of transcriptional activity in the Arabidopsis genome.</title>
        <authorList>
            <person name="Yamada K."/>
            <person name="Lim J."/>
            <person name="Dale J.M."/>
            <person name="Chen H."/>
            <person name="Shinn P."/>
            <person name="Palm C.J."/>
            <person name="Southwick A.M."/>
            <person name="Wu H.C."/>
            <person name="Kim C.J."/>
            <person name="Nguyen M."/>
            <person name="Pham P.K."/>
            <person name="Cheuk R.F."/>
            <person name="Karlin-Newmann G."/>
            <person name="Liu S.X."/>
            <person name="Lam B."/>
            <person name="Sakano H."/>
            <person name="Wu T."/>
            <person name="Yu G."/>
            <person name="Miranda M."/>
            <person name="Quach H.L."/>
            <person name="Tripp M."/>
            <person name="Chang C.H."/>
            <person name="Lee J.M."/>
            <person name="Toriumi M.J."/>
            <person name="Chan M.M."/>
            <person name="Tang C.C."/>
            <person name="Onodera C.S."/>
            <person name="Deng J.M."/>
            <person name="Akiyama K."/>
            <person name="Ansari Y."/>
            <person name="Arakawa T."/>
            <person name="Banh J."/>
            <person name="Banno F."/>
            <person name="Bowser L."/>
            <person name="Brooks S.Y."/>
            <person name="Carninci P."/>
            <person name="Chao Q."/>
            <person name="Choy N."/>
            <person name="Enju A."/>
            <person name="Goldsmith A.D."/>
            <person name="Gurjal M."/>
            <person name="Hansen N.F."/>
            <person name="Hayashizaki Y."/>
            <person name="Johnson-Hopson C."/>
            <person name="Hsuan V.W."/>
            <person name="Iida K."/>
            <person name="Karnes M."/>
            <person name="Khan S."/>
            <person name="Koesema E."/>
            <person name="Ishida J."/>
            <person name="Jiang P.X."/>
            <person name="Jones T."/>
            <person name="Kawai J."/>
            <person name="Kamiya A."/>
            <person name="Meyers C."/>
            <person name="Nakajima M."/>
            <person name="Narusaka M."/>
            <person name="Seki M."/>
            <person name="Sakurai T."/>
            <person name="Satou M."/>
            <person name="Tamse R."/>
            <person name="Vaysberg M."/>
            <person name="Wallender E.K."/>
            <person name="Wong C."/>
            <person name="Yamamura Y."/>
            <person name="Yuan S."/>
            <person name="Shinozaki K."/>
            <person name="Davis R.W."/>
            <person name="Theologis A."/>
            <person name="Ecker J.R."/>
        </authorList>
    </citation>
    <scope>NUCLEOTIDE SEQUENCE [LARGE SCALE MRNA]</scope>
    <source>
        <strain>cv. Columbia</strain>
    </source>
</reference>
<reference key="5">
    <citation type="journal article" date="2008" name="Plant J.">
        <title>Peroxisomal Delta(3),Delta(2)-enoyl CoA isomerases and evolution of cytosolic paralogues in embryophytes.</title>
        <authorList>
            <person name="Goepfert S."/>
            <person name="Vidoudez C."/>
            <person name="Tellgren-Roth C."/>
            <person name="Delessert S."/>
            <person name="Hiltunen J.K."/>
            <person name="Poirier Y."/>
        </authorList>
    </citation>
    <scope>FUNCTION</scope>
    <scope>CATALYTIC ACTIVITY</scope>
    <scope>SUBCELLULAR LOCATION</scope>
    <scope>GENE FAMILY</scope>
</reference>